<proteinExistence type="evidence at protein level"/>
<accession>Q9QY16</accession>
<sequence length="483" mass="54791">MASLLWGGDAGAAESERLNSHFSNLVHPRKNLRGIRSTTVPNIDGSLNTEEDDDEDDVVDLAANSLLNKLIRQSLVESSHRVEVLQKDPSSPLYSVKTFEELRLKEELLKGIYAMGFNRPSKIQEMALPMMLAHPPQNLIAQSQSGTGKTAAFVLAMLNRVNALELFPQCLCLAPTYELALQTGRVVERMGKFCVDVEVMYAIRGNRIPRGTDVTKQIVIGTPGTVLDWCFKRKLIDLTKIRVFVLDEADVMIDTQGFSDQSIRIQRALPSECQMLLFSATFEDSVWQFAERIIPDPNVIKLRKEELTLNNIRQYYVLCENRKDKYQALCNIYGGITIGQAIIFCQTRRNAKWLTVEMMQDGHQVSLLSGELTVEQRASIIQRFRDGKEKVLITTNVCARGIDVKQVTIVVNFDLPVNQSEEPDYETYLHRIGRTGRFGKKGLAFNMIEVDKLPLLMKIQDHFNSSIKQLDPEDMDEIEKIEY</sequence>
<protein>
    <recommendedName>
        <fullName>ATP-dependent RNA helicase DDX25</fullName>
        <ecNumber>3.6.4.13</ecNumber>
    </recommendedName>
    <alternativeName>
        <fullName>DEAD box protein 25</fullName>
    </alternativeName>
    <alternativeName>
        <fullName>Gonadotropin-regulated testicular RNA helicase</fullName>
    </alternativeName>
</protein>
<evidence type="ECO:0000250" key="1"/>
<evidence type="ECO:0000250" key="2">
    <source>
        <dbReference type="UniProtKB" id="Q9QY15"/>
    </source>
</evidence>
<evidence type="ECO:0000255" key="3">
    <source>
        <dbReference type="PROSITE-ProRule" id="PRU00541"/>
    </source>
</evidence>
<evidence type="ECO:0000255" key="4">
    <source>
        <dbReference type="PROSITE-ProRule" id="PRU00542"/>
    </source>
</evidence>
<evidence type="ECO:0000269" key="5">
    <source>
    </source>
</evidence>
<evidence type="ECO:0000269" key="6">
    <source>
    </source>
</evidence>
<evidence type="ECO:0000305" key="7"/>
<organism>
    <name type="scientific">Rattus norvegicus</name>
    <name type="common">Rat</name>
    <dbReference type="NCBI Taxonomy" id="10116"/>
    <lineage>
        <taxon>Eukaryota</taxon>
        <taxon>Metazoa</taxon>
        <taxon>Chordata</taxon>
        <taxon>Craniata</taxon>
        <taxon>Vertebrata</taxon>
        <taxon>Euteleostomi</taxon>
        <taxon>Mammalia</taxon>
        <taxon>Eutheria</taxon>
        <taxon>Euarchontoglires</taxon>
        <taxon>Glires</taxon>
        <taxon>Rodentia</taxon>
        <taxon>Myomorpha</taxon>
        <taxon>Muroidea</taxon>
        <taxon>Muridae</taxon>
        <taxon>Murinae</taxon>
        <taxon>Rattus</taxon>
    </lineage>
</organism>
<comment type="function">
    <text evidence="1">ATP-dependent RNA helicase. Required for mRNA export and translation regulation during spermatid development (By similarity).</text>
</comment>
<comment type="catalytic activity">
    <reaction>
        <text>ATP + H2O = ADP + phosphate + H(+)</text>
        <dbReference type="Rhea" id="RHEA:13065"/>
        <dbReference type="ChEBI" id="CHEBI:15377"/>
        <dbReference type="ChEBI" id="CHEBI:15378"/>
        <dbReference type="ChEBI" id="CHEBI:30616"/>
        <dbReference type="ChEBI" id="CHEBI:43474"/>
        <dbReference type="ChEBI" id="CHEBI:456216"/>
        <dbReference type="EC" id="3.6.4.13"/>
    </reaction>
</comment>
<comment type="subcellular location">
    <subcellularLocation>
        <location evidence="6">Cytoplasm</location>
    </subcellularLocation>
    <subcellularLocation>
        <location evidence="6">Nucleus</location>
    </subcellularLocation>
    <text evidence="2">Detected in both cytoplasm and nucleus of testicular cells. Also detected in chromatoid bodies of round spermatids (By similarity).</text>
</comment>
<comment type="alternative products">
    <event type="alternative initiation"/>
    <isoform>
        <id>Q9QY16-1</id>
        <name>1</name>
        <sequence type="displayed"/>
    </isoform>
    <isoform>
        <id>Q9QY16-2</id>
        <name>2</name>
        <sequence type="described" ref="VSP_018877"/>
    </isoform>
    <isoform>
        <id>Q9QY16-3</id>
        <name>3</name>
        <sequence type="described" ref="VSP_018878"/>
    </isoform>
</comment>
<comment type="tissue specificity">
    <text evidence="5">Isoform 1 is expressed in germ cells. Isoform 2 is highly expressed in Leydig cells and weakly expressed in the pituitary and hypothalamus. Isoform 3 is weakly expressed only in germ cells.</text>
</comment>
<comment type="developmental stage">
    <text evidence="5">Expressed in pubertal and adult animals but not in immature animals.</text>
</comment>
<comment type="induction">
    <text evidence="5">By gonadotropin in Leydig cells. Inhibited by flutamine.</text>
</comment>
<comment type="PTM">
    <text evidence="6">Phosphorylated on threonine residues. The phosphorylated form is found in the cytoplasm but not in the nucleus.</text>
</comment>
<comment type="miscellaneous">
    <molecule>Isoform 3</molecule>
    <text evidence="7">May start at Met-200 rather than Met-190.</text>
</comment>
<comment type="similarity">
    <text evidence="7">Belongs to the DEAD box helicase family.</text>
</comment>
<name>DDX25_RAT</name>
<reference key="1">
    <citation type="journal article" date="1999" name="J. Biol. Chem.">
        <title>A novel gonadotropin-regulated testicular RNA helicase: a new member of the DEAD-box family.</title>
        <authorList>
            <person name="Tang P.-Z."/>
            <person name="Tsai-Morris C.-H."/>
            <person name="Dufau M.L."/>
        </authorList>
    </citation>
    <scope>NUCLEOTIDE SEQUENCE [MRNA]</scope>
    <source>
        <strain>Sprague-Dawley</strain>
        <tissue>Testis</tissue>
    </source>
</reference>
<reference key="2">
    <citation type="journal article" date="2003" name="J. Biol. Chem.">
        <title>Cell-specific and hormone-regulated expression of gonadotropin-regulated testicular RNA helicase gene (GRTH/Ddx25) resulting from alternative utilization of translation initiation codons in the rat testis.</title>
        <authorList>
            <person name="Sheng Y."/>
            <person name="Tsai-Morris C.-H."/>
            <person name="Dufau M.L."/>
        </authorList>
    </citation>
    <scope>NUCLEOTIDE SEQUENCE [MRNA]</scope>
    <scope>SEQUENCE REVISION TO N-TERMINUS</scope>
    <scope>ALTERNATIVE INITIATION</scope>
    <scope>TISSUE SPECIFICITY</scope>
    <scope>DEVELOPMENTAL STAGE</scope>
    <scope>INDUCTION</scope>
</reference>
<reference key="3">
    <citation type="journal article" date="2006" name="J. Biol. Chem.">
        <title>Gonadotropin-regulated testicular RNA helicase (GRTH/Ddx25) is a transport protein involved in gene-specific mRNA export and protein translation during spermatogenesis.</title>
        <authorList>
            <person name="Sheng Y."/>
            <person name="Tsai-Morris C.-H."/>
            <person name="Gutti R."/>
            <person name="Maeda Y."/>
            <person name="Dufau M.L."/>
        </authorList>
    </citation>
    <scope>SUBCELLULAR LOCATION</scope>
    <scope>PHOSPHORYLATION</scope>
    <scope>NUCLEAR EXPORT SIGNAL</scope>
    <scope>NUCLEAR LOCALIZATION SIGNAL</scope>
    <scope>MUTAGENESIS OF LEU-66; LEU-67; LEU-70; ARG-103; LEU-104; LYS-105; LEU-108 AND LEU-109</scope>
</reference>
<reference key="4">
    <citation type="journal article" date="2012" name="Nat. Commun.">
        <title>Quantitative maps of protein phosphorylation sites across 14 different rat organs and tissues.</title>
        <authorList>
            <person name="Lundby A."/>
            <person name="Secher A."/>
            <person name="Lage K."/>
            <person name="Nordsborg N.B."/>
            <person name="Dmytriyev A."/>
            <person name="Lundby C."/>
            <person name="Olsen J.V."/>
        </authorList>
    </citation>
    <scope>IDENTIFICATION BY MASS SPECTROMETRY [LARGE SCALE ANALYSIS]</scope>
</reference>
<dbReference type="EC" id="3.6.4.13"/>
<dbReference type="EMBL" id="AF142629">
    <property type="protein sequence ID" value="AAF21360.2"/>
    <property type="molecule type" value="mRNA"/>
</dbReference>
<dbReference type="RefSeq" id="NP_113818.2">
    <molecule id="Q9QY16-1"/>
    <property type="nucleotide sequence ID" value="NM_031630.2"/>
</dbReference>
<dbReference type="SMR" id="Q9QY16"/>
<dbReference type="FunCoup" id="Q9QY16">
    <property type="interactions" value="1273"/>
</dbReference>
<dbReference type="STRING" id="10116.ENSRNOP00000017307"/>
<dbReference type="iPTMnet" id="Q9QY16"/>
<dbReference type="PhosphoSitePlus" id="Q9QY16"/>
<dbReference type="PaxDb" id="10116-ENSRNOP00000017307"/>
<dbReference type="GeneID" id="58856"/>
<dbReference type="KEGG" id="rno:58856"/>
<dbReference type="UCSC" id="RGD:68381">
    <molecule id="Q9QY16-1"/>
    <property type="organism name" value="rat"/>
</dbReference>
<dbReference type="AGR" id="RGD:68381"/>
<dbReference type="CTD" id="29118"/>
<dbReference type="RGD" id="68381">
    <property type="gene designation" value="Ddx25"/>
</dbReference>
<dbReference type="eggNOG" id="KOG0332">
    <property type="taxonomic scope" value="Eukaryota"/>
</dbReference>
<dbReference type="InParanoid" id="Q9QY16"/>
<dbReference type="OrthoDB" id="29860at9989"/>
<dbReference type="PhylomeDB" id="Q9QY16"/>
<dbReference type="BRENDA" id="3.6.4.12">
    <property type="organism ID" value="5301"/>
</dbReference>
<dbReference type="BRENDA" id="3.6.4.13">
    <property type="organism ID" value="5301"/>
</dbReference>
<dbReference type="CD-CODE" id="246D7041">
    <property type="entry name" value="Chromatoid body"/>
</dbReference>
<dbReference type="PRO" id="PR:Q9QY16"/>
<dbReference type="Proteomes" id="UP000002494">
    <property type="component" value="Unplaced"/>
</dbReference>
<dbReference type="GO" id="GO:0033391">
    <property type="term" value="C:chromatoid body"/>
    <property type="evidence" value="ECO:0000250"/>
    <property type="project" value="UniProtKB"/>
</dbReference>
<dbReference type="GO" id="GO:0005737">
    <property type="term" value="C:cytoplasm"/>
    <property type="evidence" value="ECO:0000314"/>
    <property type="project" value="UniProtKB"/>
</dbReference>
<dbReference type="GO" id="GO:0010494">
    <property type="term" value="C:cytoplasmic stress granule"/>
    <property type="evidence" value="ECO:0000318"/>
    <property type="project" value="GO_Central"/>
</dbReference>
<dbReference type="GO" id="GO:0005634">
    <property type="term" value="C:nucleus"/>
    <property type="evidence" value="ECO:0000314"/>
    <property type="project" value="UniProtKB"/>
</dbReference>
<dbReference type="GO" id="GO:0005524">
    <property type="term" value="F:ATP binding"/>
    <property type="evidence" value="ECO:0000250"/>
    <property type="project" value="UniProtKB"/>
</dbReference>
<dbReference type="GO" id="GO:0016887">
    <property type="term" value="F:ATP hydrolysis activity"/>
    <property type="evidence" value="ECO:0000314"/>
    <property type="project" value="RGD"/>
</dbReference>
<dbReference type="GO" id="GO:0003729">
    <property type="term" value="F:mRNA binding"/>
    <property type="evidence" value="ECO:0000318"/>
    <property type="project" value="GO_Central"/>
</dbReference>
<dbReference type="GO" id="GO:0003723">
    <property type="term" value="F:RNA binding"/>
    <property type="evidence" value="ECO:0000314"/>
    <property type="project" value="RGD"/>
</dbReference>
<dbReference type="GO" id="GO:0003724">
    <property type="term" value="F:RNA helicase activity"/>
    <property type="evidence" value="ECO:0000314"/>
    <property type="project" value="RGD"/>
</dbReference>
<dbReference type="GO" id="GO:0006406">
    <property type="term" value="P:mRNA export from nucleus"/>
    <property type="evidence" value="ECO:0000250"/>
    <property type="project" value="UniProtKB"/>
</dbReference>
<dbReference type="GO" id="GO:0016973">
    <property type="term" value="P:poly(A)+ mRNA export from nucleus"/>
    <property type="evidence" value="ECO:0000318"/>
    <property type="project" value="GO_Central"/>
</dbReference>
<dbReference type="GO" id="GO:0006417">
    <property type="term" value="P:regulation of translation"/>
    <property type="evidence" value="ECO:0000250"/>
    <property type="project" value="UniProtKB"/>
</dbReference>
<dbReference type="GO" id="GO:0007286">
    <property type="term" value="P:spermatid development"/>
    <property type="evidence" value="ECO:0000250"/>
    <property type="project" value="UniProtKB"/>
</dbReference>
<dbReference type="CDD" id="cd18787">
    <property type="entry name" value="SF2_C_DEAD"/>
    <property type="match status" value="1"/>
</dbReference>
<dbReference type="FunFam" id="3.40.50.300:FF:000318">
    <property type="entry name" value="ATP-dependent RNA helicase DDX19B"/>
    <property type="match status" value="1"/>
</dbReference>
<dbReference type="FunFam" id="3.40.50.300:FF:000357">
    <property type="entry name" value="ATP-dependent RNA helicase DDX19B"/>
    <property type="match status" value="1"/>
</dbReference>
<dbReference type="Gene3D" id="6.10.250.2170">
    <property type="match status" value="1"/>
</dbReference>
<dbReference type="Gene3D" id="3.40.50.300">
    <property type="entry name" value="P-loop containing nucleotide triphosphate hydrolases"/>
    <property type="match status" value="2"/>
</dbReference>
<dbReference type="InterPro" id="IPR011545">
    <property type="entry name" value="DEAD/DEAH_box_helicase_dom"/>
</dbReference>
<dbReference type="InterPro" id="IPR014001">
    <property type="entry name" value="Helicase_ATP-bd"/>
</dbReference>
<dbReference type="InterPro" id="IPR001650">
    <property type="entry name" value="Helicase_C-like"/>
</dbReference>
<dbReference type="InterPro" id="IPR027417">
    <property type="entry name" value="P-loop_NTPase"/>
</dbReference>
<dbReference type="InterPro" id="IPR014014">
    <property type="entry name" value="RNA_helicase_DEAD_Q_motif"/>
</dbReference>
<dbReference type="PANTHER" id="PTHR47958">
    <property type="entry name" value="ATP-DEPENDENT RNA HELICASE DBP3"/>
    <property type="match status" value="1"/>
</dbReference>
<dbReference type="Pfam" id="PF00270">
    <property type="entry name" value="DEAD"/>
    <property type="match status" value="1"/>
</dbReference>
<dbReference type="Pfam" id="PF00271">
    <property type="entry name" value="Helicase_C"/>
    <property type="match status" value="1"/>
</dbReference>
<dbReference type="SMART" id="SM00487">
    <property type="entry name" value="DEXDc"/>
    <property type="match status" value="1"/>
</dbReference>
<dbReference type="SMART" id="SM00490">
    <property type="entry name" value="HELICc"/>
    <property type="match status" value="1"/>
</dbReference>
<dbReference type="SUPFAM" id="SSF52540">
    <property type="entry name" value="P-loop containing nucleoside triphosphate hydrolases"/>
    <property type="match status" value="1"/>
</dbReference>
<dbReference type="PROSITE" id="PS51192">
    <property type="entry name" value="HELICASE_ATP_BIND_1"/>
    <property type="match status" value="1"/>
</dbReference>
<dbReference type="PROSITE" id="PS51194">
    <property type="entry name" value="HELICASE_CTER"/>
    <property type="match status" value="1"/>
</dbReference>
<dbReference type="PROSITE" id="PS51195">
    <property type="entry name" value="Q_MOTIF"/>
    <property type="match status" value="1"/>
</dbReference>
<keyword id="KW-0024">Alternative initiation</keyword>
<keyword id="KW-0067">ATP-binding</keyword>
<keyword id="KW-0963">Cytoplasm</keyword>
<keyword id="KW-0217">Developmental protein</keyword>
<keyword id="KW-0221">Differentiation</keyword>
<keyword id="KW-0347">Helicase</keyword>
<keyword id="KW-0378">Hydrolase</keyword>
<keyword id="KW-0509">mRNA transport</keyword>
<keyword id="KW-0547">Nucleotide-binding</keyword>
<keyword id="KW-0539">Nucleus</keyword>
<keyword id="KW-0597">Phosphoprotein</keyword>
<keyword id="KW-1185">Reference proteome</keyword>
<keyword id="KW-0694">RNA-binding</keyword>
<keyword id="KW-0744">Spermatogenesis</keyword>
<keyword id="KW-0810">Translation regulation</keyword>
<keyword id="KW-0813">Transport</keyword>
<feature type="chain" id="PRO_0000030817" description="ATP-dependent RNA helicase DDX25">
    <location>
        <begin position="1"/>
        <end position="483"/>
    </location>
</feature>
<feature type="domain" description="Helicase ATP-binding" evidence="3">
    <location>
        <begin position="130"/>
        <end position="300"/>
    </location>
</feature>
<feature type="domain" description="Helicase C-terminal" evidence="4">
    <location>
        <begin position="311"/>
        <end position="478"/>
    </location>
</feature>
<feature type="short sequence motif" description="Nuclear export signal">
    <location>
        <begin position="61"/>
        <end position="74"/>
    </location>
</feature>
<feature type="short sequence motif" description="Q motif">
    <location>
        <begin position="97"/>
        <end position="125"/>
    </location>
</feature>
<feature type="short sequence motif" description="Nuclear localization signal" evidence="6">
    <location>
        <begin position="100"/>
        <end position="114"/>
    </location>
</feature>
<feature type="short sequence motif" description="DEAD box">
    <location>
        <begin position="247"/>
        <end position="250"/>
    </location>
</feature>
<feature type="binding site" evidence="3">
    <location>
        <begin position="143"/>
        <end position="150"/>
    </location>
    <ligand>
        <name>ATP</name>
        <dbReference type="ChEBI" id="CHEBI:30616"/>
    </ligand>
</feature>
<feature type="modified residue" description="Phosphothreonine" evidence="2">
    <location>
        <position position="49"/>
    </location>
</feature>
<feature type="splice variant" id="VSP_018878" description="In isoform 3." evidence="7">
    <location>
        <begin position="1"/>
        <end position="189"/>
    </location>
</feature>
<feature type="splice variant" id="VSP_018877" description="In isoform 2." evidence="7">
    <location>
        <begin position="1"/>
        <end position="114"/>
    </location>
</feature>
<feature type="mutagenesis site" description="Enhances nuclear expression; when associated with A-67 and A-70." evidence="6">
    <original>L</original>
    <variation>A</variation>
    <location>
        <position position="66"/>
    </location>
</feature>
<feature type="mutagenesis site" description="Enhances nuclear expression; when associated with A-66 and A-70." evidence="6">
    <original>L</original>
    <variation>A</variation>
    <location>
        <position position="67"/>
    </location>
</feature>
<feature type="mutagenesis site" description="Enhances nuclear expression; when associated with A-66 and A-67." evidence="6">
    <original>L</original>
    <variation>A</variation>
    <location>
        <position position="70"/>
    </location>
</feature>
<feature type="mutagenesis site" description="Abolishes nuclear expression." evidence="6">
    <original>R</original>
    <variation>A</variation>
    <location>
        <position position="103"/>
    </location>
</feature>
<feature type="mutagenesis site" description="Decreases nuclear expression; when associated with A-108 and A-109." evidence="6">
    <original>L</original>
    <variation>A</variation>
    <location>
        <position position="104"/>
    </location>
</feature>
<feature type="mutagenesis site" description="Abolishes nuclear expression." evidence="6">
    <original>K</original>
    <variation>A</variation>
    <location>
        <position position="105"/>
    </location>
</feature>
<feature type="mutagenesis site" description="Decreases nuclear expression; when associated with A-104 and A-109." evidence="6">
    <original>L</original>
    <variation>A</variation>
    <location>
        <position position="108"/>
    </location>
</feature>
<feature type="mutagenesis site" description="Decreases nuclear expression; when associated with A-104 and A-108." evidence="6">
    <original>L</original>
    <variation>A</variation>
    <location>
        <position position="109"/>
    </location>
</feature>
<gene>
    <name type="primary">Ddx25</name>
    <name type="synonym">Grth</name>
</gene>